<organism>
    <name type="scientific">Arabidopsis thaliana</name>
    <name type="common">Mouse-ear cress</name>
    <dbReference type="NCBI Taxonomy" id="3702"/>
    <lineage>
        <taxon>Eukaryota</taxon>
        <taxon>Viridiplantae</taxon>
        <taxon>Streptophyta</taxon>
        <taxon>Embryophyta</taxon>
        <taxon>Tracheophyta</taxon>
        <taxon>Spermatophyta</taxon>
        <taxon>Magnoliopsida</taxon>
        <taxon>eudicotyledons</taxon>
        <taxon>Gunneridae</taxon>
        <taxon>Pentapetalae</taxon>
        <taxon>rosids</taxon>
        <taxon>malvids</taxon>
        <taxon>Brassicales</taxon>
        <taxon>Brassicaceae</taxon>
        <taxon>Camelineae</taxon>
        <taxon>Arabidopsis</taxon>
    </lineage>
</organism>
<keyword id="KW-0963">Cytoplasm</keyword>
<keyword id="KW-0456">Lyase</keyword>
<keyword id="KW-0460">Magnesium</keyword>
<keyword id="KW-0464">Manganese</keyword>
<keyword id="KW-0479">Metal-binding</keyword>
<keyword id="KW-1185">Reference proteome</keyword>
<protein>
    <recommendedName>
        <fullName evidence="4">Terpenoid synthase 9</fullName>
        <shortName evidence="4">AtTPS09</shortName>
        <ecNumber>4.2.3.-</ecNumber>
    </recommendedName>
</protein>
<feature type="chain" id="PRO_0000403705" description="Terpenoid synthase 9">
    <location>
        <begin position="1"/>
        <end position="607"/>
    </location>
</feature>
<feature type="short sequence motif" description="DDXXD motif" evidence="5">
    <location>
        <begin position="356"/>
        <end position="360"/>
    </location>
</feature>
<feature type="binding site" evidence="1">
    <location>
        <position position="356"/>
    </location>
    <ligand>
        <name>Mg(2+)</name>
        <dbReference type="ChEBI" id="CHEBI:18420"/>
        <label>1</label>
    </ligand>
</feature>
<feature type="binding site" evidence="1">
    <location>
        <position position="356"/>
    </location>
    <ligand>
        <name>Mg(2+)</name>
        <dbReference type="ChEBI" id="CHEBI:18420"/>
        <label>2</label>
    </ligand>
</feature>
<feature type="binding site" evidence="1">
    <location>
        <position position="360"/>
    </location>
    <ligand>
        <name>Mg(2+)</name>
        <dbReference type="ChEBI" id="CHEBI:18420"/>
        <label>1</label>
    </ligand>
</feature>
<feature type="binding site" evidence="1">
    <location>
        <position position="360"/>
    </location>
    <ligand>
        <name>Mg(2+)</name>
        <dbReference type="ChEBI" id="CHEBI:18420"/>
        <label>2</label>
    </ligand>
</feature>
<feature type="binding site" evidence="1">
    <location>
        <position position="501"/>
    </location>
    <ligand>
        <name>Mg(2+)</name>
        <dbReference type="ChEBI" id="CHEBI:18420"/>
        <label>3</label>
    </ligand>
</feature>
<feature type="binding site" evidence="1">
    <location>
        <position position="509"/>
    </location>
    <ligand>
        <name>Mg(2+)</name>
        <dbReference type="ChEBI" id="CHEBI:18420"/>
        <label>3</label>
    </ligand>
</feature>
<feature type="sequence conflict" description="In Ref. 1; AAO85535." evidence="5" ref="1">
    <original>T</original>
    <variation>S</variation>
    <location>
        <position position="50"/>
    </location>
</feature>
<feature type="sequence conflict" description="In Ref. 5; BAD95195." evidence="5" ref="5">
    <original>E</original>
    <variation>G</variation>
    <location>
        <position position="335"/>
    </location>
</feature>
<feature type="sequence conflict" description="In Ref. 1; AAO85535." evidence="5" ref="1">
    <original>GT</original>
    <variation>DS</variation>
    <location>
        <begin position="475"/>
        <end position="476"/>
    </location>
</feature>
<feature type="sequence conflict" description="In Ref. 1; AAO85535." evidence="5" ref="1">
    <original>L</original>
    <variation>I</variation>
    <location>
        <position position="537"/>
    </location>
</feature>
<feature type="sequence conflict" description="In Ref. 1; AAO85535." evidence="5" ref="1">
    <original>S</original>
    <variation>P</variation>
    <location>
        <position position="559"/>
    </location>
</feature>
<feature type="sequence conflict" description="In Ref. 1; AAO85535." evidence="5" ref="1">
    <original>KIE</original>
    <variation>IIK</variation>
    <location>
        <begin position="590"/>
        <end position="592"/>
    </location>
</feature>
<feature type="sequence conflict" description="In Ref. 1; AAO85535." evidence="5" ref="1">
    <original>HTLKM</original>
    <variation>QID</variation>
    <location>
        <begin position="602"/>
        <end position="606"/>
    </location>
</feature>
<accession>Q8L7G4</accession>
<accession>F4JUT0</accession>
<accession>O65437</accession>
<accession>Q56XR1</accession>
<accession>Q84UU8</accession>
<gene>
    <name evidence="4" type="primary">TPS09</name>
    <name evidence="6" type="ordered locus">At4g20230</name>
    <name type="ORF">F1C12.150</name>
</gene>
<sequence length="607" mass="70437">MEATSVFRPKLGSQFSLPSTTNLFPLRKLYGFPLTSFPGKPIKRIRLKATNTLTFDDKERTRKFKKLPLSEWTHYFHSIPLDISEMDALKEEIDELKPKVKNTFMSSQGSDSTKTKILMIYLFVSLGLAYHFEEEIYETLKEGFENIEKIMAGEEDLYTVSIIFWVFRRYGHYISSDVFQRFKGSNGSFKESLIGDAKGMLSLYEAAHLATTKDYILDEALIFTSSHLETLVATGTCPPHLLARIRNALSICQHWNFEVLVPLDFIPFYEQEKDHDEMLLKFAKLSFKYLKLIYLQDLKILTKWYKKLDFPSKFPPYFKDRCVENYFFVLPVFFEPQLSSARMLLTKGFILLGIQDDTFDRYASISEAESLGNSLKRWAPDHSMDKQPEYLKSVLKVILDTFQEFEKELSPEGRSYSVKYTIEEFQASSKANVELAKWAQVSHVPSFEKYMEVGQMEITACVTVAYILMSMGKTGTKEAFEWLKSRPKLVQSLCTKGRLMNDIAGFEDDMSRGYVVNAVNCYMKQYGVTEKEAFKELRKMVVNTHKTLNEEFLTTTCVSHYVLRETMDFARMIIVTYNGYEGFTRPDEGKIEEYMTSLFVDHTLKML</sequence>
<reference key="1">
    <citation type="journal article" date="2003" name="Plant Cell">
        <title>Biosynthesis and emission of terpenoid volatiles from Arabidopsis flowers.</title>
        <authorList>
            <person name="Chen F."/>
            <person name="Tholl D."/>
            <person name="D'Auria J.C."/>
            <person name="Farooq A."/>
            <person name="Pichersky E."/>
            <person name="Gershenzon J."/>
        </authorList>
    </citation>
    <scope>NUCLEOTIDE SEQUENCE [MRNA]</scope>
    <scope>TISSUE SPECIFICITY</scope>
    <source>
        <strain>cv. Landsberg erecta</strain>
    </source>
</reference>
<reference key="2">
    <citation type="journal article" date="1999" name="Nature">
        <title>Sequence and analysis of chromosome 4 of the plant Arabidopsis thaliana.</title>
        <authorList>
            <person name="Mayer K.F.X."/>
            <person name="Schueller C."/>
            <person name="Wambutt R."/>
            <person name="Murphy G."/>
            <person name="Volckaert G."/>
            <person name="Pohl T."/>
            <person name="Duesterhoeft A."/>
            <person name="Stiekema W."/>
            <person name="Entian K.-D."/>
            <person name="Terryn N."/>
            <person name="Harris B."/>
            <person name="Ansorge W."/>
            <person name="Brandt P."/>
            <person name="Grivell L.A."/>
            <person name="Rieger M."/>
            <person name="Weichselgartner M."/>
            <person name="de Simone V."/>
            <person name="Obermaier B."/>
            <person name="Mache R."/>
            <person name="Mueller M."/>
            <person name="Kreis M."/>
            <person name="Delseny M."/>
            <person name="Puigdomenech P."/>
            <person name="Watson M."/>
            <person name="Schmidtheini T."/>
            <person name="Reichert B."/>
            <person name="Portetelle D."/>
            <person name="Perez-Alonso M."/>
            <person name="Boutry M."/>
            <person name="Bancroft I."/>
            <person name="Vos P."/>
            <person name="Hoheisel J."/>
            <person name="Zimmermann W."/>
            <person name="Wedler H."/>
            <person name="Ridley P."/>
            <person name="Langham S.-A."/>
            <person name="McCullagh B."/>
            <person name="Bilham L."/>
            <person name="Robben J."/>
            <person name="van der Schueren J."/>
            <person name="Grymonprez B."/>
            <person name="Chuang Y.-J."/>
            <person name="Vandenbussche F."/>
            <person name="Braeken M."/>
            <person name="Weltjens I."/>
            <person name="Voet M."/>
            <person name="Bastiaens I."/>
            <person name="Aert R."/>
            <person name="Defoor E."/>
            <person name="Weitzenegger T."/>
            <person name="Bothe G."/>
            <person name="Ramsperger U."/>
            <person name="Hilbert H."/>
            <person name="Braun M."/>
            <person name="Holzer E."/>
            <person name="Brandt A."/>
            <person name="Peters S."/>
            <person name="van Staveren M."/>
            <person name="Dirkse W."/>
            <person name="Mooijman P."/>
            <person name="Klein Lankhorst R."/>
            <person name="Rose M."/>
            <person name="Hauf J."/>
            <person name="Koetter P."/>
            <person name="Berneiser S."/>
            <person name="Hempel S."/>
            <person name="Feldpausch M."/>
            <person name="Lamberth S."/>
            <person name="Van den Daele H."/>
            <person name="De Keyser A."/>
            <person name="Buysshaert C."/>
            <person name="Gielen J."/>
            <person name="Villarroel R."/>
            <person name="De Clercq R."/>
            <person name="van Montagu M."/>
            <person name="Rogers J."/>
            <person name="Cronin A."/>
            <person name="Quail M.A."/>
            <person name="Bray-Allen S."/>
            <person name="Clark L."/>
            <person name="Doggett J."/>
            <person name="Hall S."/>
            <person name="Kay M."/>
            <person name="Lennard N."/>
            <person name="McLay K."/>
            <person name="Mayes R."/>
            <person name="Pettett A."/>
            <person name="Rajandream M.A."/>
            <person name="Lyne M."/>
            <person name="Benes V."/>
            <person name="Rechmann S."/>
            <person name="Borkova D."/>
            <person name="Bloecker H."/>
            <person name="Scharfe M."/>
            <person name="Grimm M."/>
            <person name="Loehnert T.-H."/>
            <person name="Dose S."/>
            <person name="de Haan M."/>
            <person name="Maarse A.C."/>
            <person name="Schaefer M."/>
            <person name="Mueller-Auer S."/>
            <person name="Gabel C."/>
            <person name="Fuchs M."/>
            <person name="Fartmann B."/>
            <person name="Granderath K."/>
            <person name="Dauner D."/>
            <person name="Herzl A."/>
            <person name="Neumann S."/>
            <person name="Argiriou A."/>
            <person name="Vitale D."/>
            <person name="Liguori R."/>
            <person name="Piravandi E."/>
            <person name="Massenet O."/>
            <person name="Quigley F."/>
            <person name="Clabauld G."/>
            <person name="Muendlein A."/>
            <person name="Felber R."/>
            <person name="Schnabl S."/>
            <person name="Hiller R."/>
            <person name="Schmidt W."/>
            <person name="Lecharny A."/>
            <person name="Aubourg S."/>
            <person name="Chefdor F."/>
            <person name="Cooke R."/>
            <person name="Berger C."/>
            <person name="Monfort A."/>
            <person name="Casacuberta E."/>
            <person name="Gibbons T."/>
            <person name="Weber N."/>
            <person name="Vandenbol M."/>
            <person name="Bargues M."/>
            <person name="Terol J."/>
            <person name="Torres A."/>
            <person name="Perez-Perez A."/>
            <person name="Purnelle B."/>
            <person name="Bent E."/>
            <person name="Johnson S."/>
            <person name="Tacon D."/>
            <person name="Jesse T."/>
            <person name="Heijnen L."/>
            <person name="Schwarz S."/>
            <person name="Scholler P."/>
            <person name="Heber S."/>
            <person name="Francs P."/>
            <person name="Bielke C."/>
            <person name="Frishman D."/>
            <person name="Haase D."/>
            <person name="Lemcke K."/>
            <person name="Mewes H.-W."/>
            <person name="Stocker S."/>
            <person name="Zaccaria P."/>
            <person name="Bevan M."/>
            <person name="Wilson R.K."/>
            <person name="de la Bastide M."/>
            <person name="Habermann K."/>
            <person name="Parnell L."/>
            <person name="Dedhia N."/>
            <person name="Gnoj L."/>
            <person name="Schutz K."/>
            <person name="Huang E."/>
            <person name="Spiegel L."/>
            <person name="Sekhon M."/>
            <person name="Murray J."/>
            <person name="Sheet P."/>
            <person name="Cordes M."/>
            <person name="Abu-Threideh J."/>
            <person name="Stoneking T."/>
            <person name="Kalicki J."/>
            <person name="Graves T."/>
            <person name="Harmon G."/>
            <person name="Edwards J."/>
            <person name="Latreille P."/>
            <person name="Courtney L."/>
            <person name="Cloud J."/>
            <person name="Abbott A."/>
            <person name="Scott K."/>
            <person name="Johnson D."/>
            <person name="Minx P."/>
            <person name="Bentley D."/>
            <person name="Fulton B."/>
            <person name="Miller N."/>
            <person name="Greco T."/>
            <person name="Kemp K."/>
            <person name="Kramer J."/>
            <person name="Fulton L."/>
            <person name="Mardis E."/>
            <person name="Dante M."/>
            <person name="Pepin K."/>
            <person name="Hillier L.W."/>
            <person name="Nelson J."/>
            <person name="Spieth J."/>
            <person name="Ryan E."/>
            <person name="Andrews S."/>
            <person name="Geisel C."/>
            <person name="Layman D."/>
            <person name="Du H."/>
            <person name="Ali J."/>
            <person name="Berghoff A."/>
            <person name="Jones K."/>
            <person name="Drone K."/>
            <person name="Cotton M."/>
            <person name="Joshu C."/>
            <person name="Antonoiu B."/>
            <person name="Zidanic M."/>
            <person name="Strong C."/>
            <person name="Sun H."/>
            <person name="Lamar B."/>
            <person name="Yordan C."/>
            <person name="Ma P."/>
            <person name="Zhong J."/>
            <person name="Preston R."/>
            <person name="Vil D."/>
            <person name="Shekher M."/>
            <person name="Matero A."/>
            <person name="Shah R."/>
            <person name="Swaby I.K."/>
            <person name="O'Shaughnessy A."/>
            <person name="Rodriguez M."/>
            <person name="Hoffman J."/>
            <person name="Till S."/>
            <person name="Granat S."/>
            <person name="Shohdy N."/>
            <person name="Hasegawa A."/>
            <person name="Hameed A."/>
            <person name="Lodhi M."/>
            <person name="Johnson A."/>
            <person name="Chen E."/>
            <person name="Marra M.A."/>
            <person name="Martienssen R."/>
            <person name="McCombie W.R."/>
        </authorList>
    </citation>
    <scope>NUCLEOTIDE SEQUENCE [LARGE SCALE GENOMIC DNA]</scope>
    <source>
        <strain>cv. Columbia</strain>
    </source>
</reference>
<reference key="3">
    <citation type="journal article" date="2017" name="Plant J.">
        <title>Araport11: a complete reannotation of the Arabidopsis thaliana reference genome.</title>
        <authorList>
            <person name="Cheng C.Y."/>
            <person name="Krishnakumar V."/>
            <person name="Chan A.P."/>
            <person name="Thibaud-Nissen F."/>
            <person name="Schobel S."/>
            <person name="Town C.D."/>
        </authorList>
    </citation>
    <scope>GENOME REANNOTATION</scope>
    <source>
        <strain>cv. Columbia</strain>
    </source>
</reference>
<reference key="4">
    <citation type="journal article" date="2003" name="Science">
        <title>Empirical analysis of transcriptional activity in the Arabidopsis genome.</title>
        <authorList>
            <person name="Yamada K."/>
            <person name="Lim J."/>
            <person name="Dale J.M."/>
            <person name="Chen H."/>
            <person name="Shinn P."/>
            <person name="Palm C.J."/>
            <person name="Southwick A.M."/>
            <person name="Wu H.C."/>
            <person name="Kim C.J."/>
            <person name="Nguyen M."/>
            <person name="Pham P.K."/>
            <person name="Cheuk R.F."/>
            <person name="Karlin-Newmann G."/>
            <person name="Liu S.X."/>
            <person name="Lam B."/>
            <person name="Sakano H."/>
            <person name="Wu T."/>
            <person name="Yu G."/>
            <person name="Miranda M."/>
            <person name="Quach H.L."/>
            <person name="Tripp M."/>
            <person name="Chang C.H."/>
            <person name="Lee J.M."/>
            <person name="Toriumi M.J."/>
            <person name="Chan M.M."/>
            <person name="Tang C.C."/>
            <person name="Onodera C.S."/>
            <person name="Deng J.M."/>
            <person name="Akiyama K."/>
            <person name="Ansari Y."/>
            <person name="Arakawa T."/>
            <person name="Banh J."/>
            <person name="Banno F."/>
            <person name="Bowser L."/>
            <person name="Brooks S.Y."/>
            <person name="Carninci P."/>
            <person name="Chao Q."/>
            <person name="Choy N."/>
            <person name="Enju A."/>
            <person name="Goldsmith A.D."/>
            <person name="Gurjal M."/>
            <person name="Hansen N.F."/>
            <person name="Hayashizaki Y."/>
            <person name="Johnson-Hopson C."/>
            <person name="Hsuan V.W."/>
            <person name="Iida K."/>
            <person name="Karnes M."/>
            <person name="Khan S."/>
            <person name="Koesema E."/>
            <person name="Ishida J."/>
            <person name="Jiang P.X."/>
            <person name="Jones T."/>
            <person name="Kawai J."/>
            <person name="Kamiya A."/>
            <person name="Meyers C."/>
            <person name="Nakajima M."/>
            <person name="Narusaka M."/>
            <person name="Seki M."/>
            <person name="Sakurai T."/>
            <person name="Satou M."/>
            <person name="Tamse R."/>
            <person name="Vaysberg M."/>
            <person name="Wallender E.K."/>
            <person name="Wong C."/>
            <person name="Yamamura Y."/>
            <person name="Yuan S."/>
            <person name="Shinozaki K."/>
            <person name="Davis R.W."/>
            <person name="Theologis A."/>
            <person name="Ecker J.R."/>
        </authorList>
    </citation>
    <scope>NUCLEOTIDE SEQUENCE [LARGE SCALE MRNA]</scope>
    <source>
        <strain>cv. Columbia</strain>
    </source>
</reference>
<reference key="5">
    <citation type="submission" date="2005-03" db="EMBL/GenBank/DDBJ databases">
        <title>Large-scale analysis of RIKEN Arabidopsis full-length (RAFL) cDNAs.</title>
        <authorList>
            <person name="Totoki Y."/>
            <person name="Seki M."/>
            <person name="Ishida J."/>
            <person name="Nakajima M."/>
            <person name="Enju A."/>
            <person name="Kamiya A."/>
            <person name="Narusaka M."/>
            <person name="Shin-i T."/>
            <person name="Nakagawa M."/>
            <person name="Sakamoto N."/>
            <person name="Oishi K."/>
            <person name="Kohara Y."/>
            <person name="Kobayashi M."/>
            <person name="Toyoda A."/>
            <person name="Sakaki Y."/>
            <person name="Sakurai T."/>
            <person name="Iida K."/>
            <person name="Akiyama K."/>
            <person name="Satou M."/>
            <person name="Toyoda T."/>
            <person name="Konagaya A."/>
            <person name="Carninci P."/>
            <person name="Kawai J."/>
            <person name="Hayashizaki Y."/>
            <person name="Shinozaki K."/>
        </authorList>
    </citation>
    <scope>NUCLEOTIDE SEQUENCE [LARGE SCALE MRNA]</scope>
    <source>
        <strain>cv. Columbia</strain>
    </source>
</reference>
<reference key="6">
    <citation type="journal article" date="2002" name="Mol. Genet. Genomics">
        <title>Genomic analysis of the terpenoid synthase (AtTPS) gene family of Arabidopsis thaliana.</title>
        <authorList>
            <person name="Aubourg S."/>
            <person name="Lecharny A."/>
            <person name="Bohlmann J."/>
        </authorList>
    </citation>
    <scope>GENE FAMILY</scope>
    <scope>NOMENCLATURE</scope>
</reference>
<reference key="7">
    <citation type="journal article" date="2003" name="Plant Mol. Biol.">
        <title>Genome organization in Arabidopsis thaliana: a survey for genes involved in isoprenoid and chlorophyll metabolism.</title>
        <authorList>
            <person name="Lange B.M."/>
            <person name="Ghassemian M."/>
        </authorList>
    </citation>
    <scope>GENE FAMILY</scope>
</reference>
<reference key="8">
    <citation type="journal article" date="2016" name="Front. Plant Sci.">
        <title>Identification of a dolabellane type diterpene synthase and other root-expressed diterpene synthases in Arabidopsis.</title>
        <authorList>
            <person name="Wang Q."/>
            <person name="Jia M."/>
            <person name="Huh J.H."/>
            <person name="Muchlinski A."/>
            <person name="Peters R.J."/>
            <person name="Tholl D."/>
        </authorList>
    </citation>
    <scope>FUNCTION</scope>
    <source>
        <strain>cv. Columbia</strain>
    </source>
</reference>
<proteinExistence type="evidence at transcript level"/>
<dbReference type="EC" id="4.2.3.-"/>
<dbReference type="EMBL" id="AF497487">
    <property type="protein sequence ID" value="AAO85535.1"/>
    <property type="molecule type" value="mRNA"/>
</dbReference>
<dbReference type="EMBL" id="AL022224">
    <property type="protein sequence ID" value="CAA18248.1"/>
    <property type="status" value="ALT_SEQ"/>
    <property type="molecule type" value="Genomic_DNA"/>
</dbReference>
<dbReference type="EMBL" id="AL161552">
    <property type="protein sequence ID" value="CAB79023.1"/>
    <property type="status" value="ALT_SEQ"/>
    <property type="molecule type" value="Genomic_DNA"/>
</dbReference>
<dbReference type="EMBL" id="CP002687">
    <property type="protein sequence ID" value="AEE84287.2"/>
    <property type="molecule type" value="Genomic_DNA"/>
</dbReference>
<dbReference type="EMBL" id="AY133718">
    <property type="protein sequence ID" value="AAM91652.1"/>
    <property type="status" value="ALT_INIT"/>
    <property type="molecule type" value="mRNA"/>
</dbReference>
<dbReference type="EMBL" id="AK221612">
    <property type="protein sequence ID" value="BAD95195.1"/>
    <property type="status" value="ALT_INIT"/>
    <property type="molecule type" value="mRNA"/>
</dbReference>
<dbReference type="PIR" id="T05331">
    <property type="entry name" value="T05331"/>
</dbReference>
<dbReference type="RefSeq" id="NP_001320004.1">
    <property type="nucleotide sequence ID" value="NM_001341404.1"/>
</dbReference>
<dbReference type="SMR" id="Q8L7G4"/>
<dbReference type="FunCoup" id="Q8L7G4">
    <property type="interactions" value="22"/>
</dbReference>
<dbReference type="STRING" id="3702.Q8L7G4"/>
<dbReference type="iPTMnet" id="Q8L7G4"/>
<dbReference type="PaxDb" id="3702-AT4G20230.1"/>
<dbReference type="EnsemblPlants" id="AT4G20230.1">
    <property type="protein sequence ID" value="AT4G20230.1"/>
    <property type="gene ID" value="AT4G20230"/>
</dbReference>
<dbReference type="GeneID" id="827770"/>
<dbReference type="Gramene" id="AT4G20230.1">
    <property type="protein sequence ID" value="AT4G20230.1"/>
    <property type="gene ID" value="AT4G20230"/>
</dbReference>
<dbReference type="KEGG" id="ath:AT4G20230"/>
<dbReference type="Araport" id="AT4G20230"/>
<dbReference type="TAIR" id="AT4G20230">
    <property type="gene designation" value="TPS30"/>
</dbReference>
<dbReference type="HOGENOM" id="CLU_003125_7_2_1"/>
<dbReference type="InParanoid" id="Q8L7G4"/>
<dbReference type="PhylomeDB" id="Q8L7G4"/>
<dbReference type="UniPathway" id="UPA00213"/>
<dbReference type="PRO" id="PR:Q8L7G4"/>
<dbReference type="Proteomes" id="UP000006548">
    <property type="component" value="Chromosome 4"/>
</dbReference>
<dbReference type="ExpressionAtlas" id="Q8L7G4">
    <property type="expression patterns" value="baseline and differential"/>
</dbReference>
<dbReference type="GO" id="GO:0005737">
    <property type="term" value="C:cytoplasm"/>
    <property type="evidence" value="ECO:0007669"/>
    <property type="project" value="UniProtKB-SubCell"/>
</dbReference>
<dbReference type="GO" id="GO:0000287">
    <property type="term" value="F:magnesium ion binding"/>
    <property type="evidence" value="ECO:0007669"/>
    <property type="project" value="InterPro"/>
</dbReference>
<dbReference type="GO" id="GO:0010333">
    <property type="term" value="F:terpene synthase activity"/>
    <property type="evidence" value="ECO:0000314"/>
    <property type="project" value="UniProtKB"/>
</dbReference>
<dbReference type="GO" id="GO:0016102">
    <property type="term" value="P:diterpenoid biosynthetic process"/>
    <property type="evidence" value="ECO:0007669"/>
    <property type="project" value="InterPro"/>
</dbReference>
<dbReference type="GO" id="GO:0016114">
    <property type="term" value="P:terpenoid biosynthetic process"/>
    <property type="evidence" value="ECO:0000314"/>
    <property type="project" value="UniProtKB"/>
</dbReference>
<dbReference type="CDD" id="cd00684">
    <property type="entry name" value="Terpene_cyclase_plant_C1"/>
    <property type="match status" value="1"/>
</dbReference>
<dbReference type="FunFam" id="1.10.600.10:FF:000007">
    <property type="entry name" value="Isoprene synthase, chloroplastic"/>
    <property type="match status" value="1"/>
</dbReference>
<dbReference type="FunFam" id="1.50.10.130:FF:000001">
    <property type="entry name" value="Isoprene synthase, chloroplastic"/>
    <property type="match status" value="1"/>
</dbReference>
<dbReference type="Gene3D" id="1.10.600.10">
    <property type="entry name" value="Farnesyl Diphosphate Synthase"/>
    <property type="match status" value="1"/>
</dbReference>
<dbReference type="Gene3D" id="1.50.10.130">
    <property type="entry name" value="Terpene synthase, N-terminal domain"/>
    <property type="match status" value="1"/>
</dbReference>
<dbReference type="InterPro" id="IPR008949">
    <property type="entry name" value="Isoprenoid_synthase_dom_sf"/>
</dbReference>
<dbReference type="InterPro" id="IPR034741">
    <property type="entry name" value="Terpene_cyclase-like_1_C"/>
</dbReference>
<dbReference type="InterPro" id="IPR044814">
    <property type="entry name" value="Terpene_cyclase_plant_C1"/>
</dbReference>
<dbReference type="InterPro" id="IPR001906">
    <property type="entry name" value="Terpene_synth_N"/>
</dbReference>
<dbReference type="InterPro" id="IPR036965">
    <property type="entry name" value="Terpene_synth_N_sf"/>
</dbReference>
<dbReference type="InterPro" id="IPR050148">
    <property type="entry name" value="Terpene_synthase-like"/>
</dbReference>
<dbReference type="InterPro" id="IPR005630">
    <property type="entry name" value="Terpene_synthase_metal-bd"/>
</dbReference>
<dbReference type="InterPro" id="IPR008930">
    <property type="entry name" value="Terpenoid_cyclase/PrenylTrfase"/>
</dbReference>
<dbReference type="PANTHER" id="PTHR31225">
    <property type="entry name" value="OS04G0344100 PROTEIN-RELATED"/>
    <property type="match status" value="1"/>
</dbReference>
<dbReference type="PANTHER" id="PTHR31225:SF242">
    <property type="entry name" value="TERPENOID SYNTHASE 9"/>
    <property type="match status" value="1"/>
</dbReference>
<dbReference type="Pfam" id="PF01397">
    <property type="entry name" value="Terpene_synth"/>
    <property type="match status" value="1"/>
</dbReference>
<dbReference type="Pfam" id="PF03936">
    <property type="entry name" value="Terpene_synth_C"/>
    <property type="match status" value="1"/>
</dbReference>
<dbReference type="SFLD" id="SFLDS00005">
    <property type="entry name" value="Isoprenoid_Synthase_Type_I"/>
    <property type="match status" value="1"/>
</dbReference>
<dbReference type="SFLD" id="SFLDG01019">
    <property type="entry name" value="Terpene_Cyclase_Like_1_C_Termi"/>
    <property type="match status" value="1"/>
</dbReference>
<dbReference type="SUPFAM" id="SSF48239">
    <property type="entry name" value="Terpenoid cyclases/Protein prenyltransferases"/>
    <property type="match status" value="1"/>
</dbReference>
<dbReference type="SUPFAM" id="SSF48576">
    <property type="entry name" value="Terpenoid synthases"/>
    <property type="match status" value="1"/>
</dbReference>
<name>TPS09_ARATH</name>
<evidence type="ECO:0000250" key="1">
    <source>
        <dbReference type="UniProtKB" id="Q40577"/>
    </source>
</evidence>
<evidence type="ECO:0000269" key="2">
    <source>
    </source>
</evidence>
<evidence type="ECO:0000269" key="3">
    <source>
    </source>
</evidence>
<evidence type="ECO:0000303" key="4">
    <source>
    </source>
</evidence>
<evidence type="ECO:0000305" key="5"/>
<evidence type="ECO:0000312" key="6">
    <source>
        <dbReference type="Araport" id="AT4G20230"/>
    </source>
</evidence>
<comment type="function">
    <text evidence="3">Involved in terpene biosynthesis in roots. Possesses diterpene (C20) synthase activity in vitro. Does not seem to be involved in sesquiterpene (C15) biosynthesis.</text>
</comment>
<comment type="cofactor">
    <cofactor evidence="1">
        <name>Mg(2+)</name>
        <dbReference type="ChEBI" id="CHEBI:18420"/>
    </cofactor>
    <cofactor evidence="1">
        <name>Mn(2+)</name>
        <dbReference type="ChEBI" id="CHEBI:29035"/>
    </cofactor>
    <text evidence="1">Binds 3 Mg(2+) or Mn(2+) ions per subunit.</text>
</comment>
<comment type="pathway">
    <text evidence="5">Secondary metabolite biosynthesis; terpenoid biosynthesis.</text>
</comment>
<comment type="subcellular location">
    <subcellularLocation>
        <location evidence="5">Cytoplasm</location>
    </subcellularLocation>
</comment>
<comment type="tissue specificity">
    <text evidence="2">Predominantly expressed in roots but also in stems, leaves and flowers.</text>
</comment>
<comment type="domain">
    <text evidence="5">The Asp-Asp-Xaa-Xaa-Asp/Glu (DDXXD/E) motif is important for the catalytic activity, presumably through binding to Mg(2+).</text>
</comment>
<comment type="similarity">
    <text evidence="5">Belongs to the terpene synthase family. Tpsa subfamily.</text>
</comment>
<comment type="sequence caution" evidence="5">
    <conflict type="erroneous initiation">
        <sequence resource="EMBL-CDS" id="AAM91652"/>
    </conflict>
    <text>Extended N-terminus.</text>
</comment>
<comment type="sequence caution" evidence="5">
    <conflict type="erroneous initiation">
        <sequence resource="EMBL-CDS" id="BAD95195"/>
    </conflict>
    <text>Extended N-terminus.</text>
</comment>
<comment type="sequence caution" evidence="5">
    <conflict type="erroneous gene model prediction">
        <sequence resource="EMBL-CDS" id="CAA18248"/>
    </conflict>
</comment>
<comment type="sequence caution" evidence="5">
    <conflict type="erroneous gene model prediction">
        <sequence resource="EMBL-CDS" id="CAB79023"/>
    </conflict>
</comment>